<gene>
    <name type="primary">cdu2</name>
    <name type="ordered locus">CT_867</name>
</gene>
<protein>
    <recommendedName>
        <fullName>Deubiquitinase and deneddylase Dub2</fullName>
        <shortName>ChlaDub2</shortName>
        <ecNumber>3.4.22.-</ecNumber>
    </recommendedName>
</protein>
<accession>O84875</accession>
<proteinExistence type="evidence at protein level"/>
<dbReference type="EC" id="3.4.22.-"/>
<dbReference type="EMBL" id="AE001273">
    <property type="protein sequence ID" value="AAC68465.1"/>
    <property type="molecule type" value="Genomic_DNA"/>
</dbReference>
<dbReference type="PIR" id="B71462">
    <property type="entry name" value="B71462"/>
</dbReference>
<dbReference type="RefSeq" id="NP_220389.1">
    <property type="nucleotide sequence ID" value="NC_000117.1"/>
</dbReference>
<dbReference type="RefSeq" id="WP_009872257.1">
    <property type="nucleotide sequence ID" value="NC_000117.1"/>
</dbReference>
<dbReference type="SMR" id="O84875"/>
<dbReference type="MEROPS" id="C48.033"/>
<dbReference type="EnsemblBacteria" id="AAC68465">
    <property type="protein sequence ID" value="AAC68465"/>
    <property type="gene ID" value="CT_867"/>
</dbReference>
<dbReference type="GeneID" id="884676"/>
<dbReference type="KEGG" id="ctr:CT_867"/>
<dbReference type="PATRIC" id="fig|272561.5.peg.958"/>
<dbReference type="HOGENOM" id="CLU_067510_0_0_0"/>
<dbReference type="InParanoid" id="O84875"/>
<dbReference type="OrthoDB" id="19177at2"/>
<dbReference type="Proteomes" id="UP000000431">
    <property type="component" value="Chromosome"/>
</dbReference>
<dbReference type="GO" id="GO:0005576">
    <property type="term" value="C:extracellular region"/>
    <property type="evidence" value="ECO:0000250"/>
    <property type="project" value="UniProtKB"/>
</dbReference>
<dbReference type="GO" id="GO:0043657">
    <property type="term" value="C:host cell"/>
    <property type="evidence" value="ECO:0007669"/>
    <property type="project" value="UniProtKB-SubCell"/>
</dbReference>
<dbReference type="GO" id="GO:0016020">
    <property type="term" value="C:membrane"/>
    <property type="evidence" value="ECO:0007669"/>
    <property type="project" value="UniProtKB-SubCell"/>
</dbReference>
<dbReference type="GO" id="GO:0004843">
    <property type="term" value="F:cysteine-type deubiquitinase activity"/>
    <property type="evidence" value="ECO:0000314"/>
    <property type="project" value="UniProtKB"/>
</dbReference>
<dbReference type="GO" id="GO:0019784">
    <property type="term" value="F:deNEDDylase activity"/>
    <property type="evidence" value="ECO:0000314"/>
    <property type="project" value="UniProtKB"/>
</dbReference>
<dbReference type="GO" id="GO:0000338">
    <property type="term" value="P:protein deneddylation"/>
    <property type="evidence" value="ECO:0000314"/>
    <property type="project" value="UniProtKB"/>
</dbReference>
<dbReference type="GO" id="GO:0016579">
    <property type="term" value="P:protein deubiquitination"/>
    <property type="evidence" value="ECO:0000314"/>
    <property type="project" value="UniProtKB"/>
</dbReference>
<dbReference type="GO" id="GO:0006508">
    <property type="term" value="P:proteolysis"/>
    <property type="evidence" value="ECO:0007669"/>
    <property type="project" value="UniProtKB-KW"/>
</dbReference>
<dbReference type="FunFam" id="3.40.395.10:FF:000012">
    <property type="entry name" value="Deubiquitinase and deneddylase Dub2"/>
    <property type="match status" value="1"/>
</dbReference>
<dbReference type="Gene3D" id="3.40.395.10">
    <property type="entry name" value="Adenoviral Proteinase, Chain A"/>
    <property type="match status" value="1"/>
</dbReference>
<dbReference type="InterPro" id="IPR038765">
    <property type="entry name" value="Papain-like_cys_pep_sf"/>
</dbReference>
<dbReference type="InterPro" id="IPR003653">
    <property type="entry name" value="Peptidase_C48_C"/>
</dbReference>
<dbReference type="Pfam" id="PF02902">
    <property type="entry name" value="Peptidase_C48"/>
    <property type="match status" value="1"/>
</dbReference>
<dbReference type="SUPFAM" id="SSF54001">
    <property type="entry name" value="Cysteine proteinases"/>
    <property type="match status" value="1"/>
</dbReference>
<feature type="chain" id="PRO_0000396496" description="Deubiquitinase and deneddylase Dub2">
    <location>
        <begin position="1"/>
        <end position="339"/>
    </location>
</feature>
<feature type="transmembrane region" description="Helical" evidence="2">
    <location>
        <begin position="36"/>
        <end position="56"/>
    </location>
</feature>
<feature type="active site" evidence="2">
    <location>
        <position position="203"/>
    </location>
</feature>
<feature type="active site" evidence="2">
    <location>
        <position position="220"/>
    </location>
</feature>
<feature type="active site" evidence="2">
    <location>
        <position position="282"/>
    </location>
</feature>
<organism>
    <name type="scientific">Chlamydia trachomatis serovar D (strain ATCC VR-885 / DSM 19411 / UW-3/Cx)</name>
    <dbReference type="NCBI Taxonomy" id="272561"/>
    <lineage>
        <taxon>Bacteria</taxon>
        <taxon>Pseudomonadati</taxon>
        <taxon>Chlamydiota</taxon>
        <taxon>Chlamydiia</taxon>
        <taxon>Chlamydiales</taxon>
        <taxon>Chlamydiaceae</taxon>
        <taxon>Chlamydia/Chlamydophila group</taxon>
        <taxon>Chlamydia</taxon>
    </lineage>
</organism>
<keyword id="KW-0378">Hydrolase</keyword>
<keyword id="KW-0472">Membrane</keyword>
<keyword id="KW-0645">Protease</keyword>
<keyword id="KW-1185">Reference proteome</keyword>
<keyword id="KW-0964">Secreted</keyword>
<keyword id="KW-0788">Thiol protease</keyword>
<keyword id="KW-0812">Transmembrane</keyword>
<keyword id="KW-1133">Transmembrane helix</keyword>
<keyword id="KW-0833">Ubl conjugation pathway</keyword>
<keyword id="KW-0843">Virulence</keyword>
<evidence type="ECO:0000250" key="1"/>
<evidence type="ECO:0000255" key="2"/>
<evidence type="ECO:0000269" key="3">
    <source>
    </source>
</evidence>
<evidence type="ECO:0000305" key="4"/>
<reference key="1">
    <citation type="journal article" date="1998" name="Science">
        <title>Genome sequence of an obligate intracellular pathogen of humans: Chlamydia trachomatis.</title>
        <authorList>
            <person name="Stephens R.S."/>
            <person name="Kalman S."/>
            <person name="Lammel C.J."/>
            <person name="Fan J."/>
            <person name="Marathe R."/>
            <person name="Aravind L."/>
            <person name="Mitchell W.P."/>
            <person name="Olinger L."/>
            <person name="Tatusov R.L."/>
            <person name="Zhao Q."/>
            <person name="Koonin E.V."/>
            <person name="Davis R.W."/>
        </authorList>
    </citation>
    <scope>NUCLEOTIDE SEQUENCE [LARGE SCALE GENOMIC DNA]</scope>
    <source>
        <strain>ATCC VR-885 / DSM 19411 / UW-3/Cx</strain>
    </source>
</reference>
<reference key="2">
    <citation type="journal article" date="2006" name="Mol. Microbiol.">
        <title>Chlamydia trachomatis-derived deubiquitinating enzymes in mammalian cells during infection.</title>
        <authorList>
            <person name="Misaghi S."/>
            <person name="Balsara Z.R."/>
            <person name="Catic A."/>
            <person name="Spooner E."/>
            <person name="Ploegh H.L."/>
            <person name="Starnbach M.N."/>
        </authorList>
    </citation>
    <scope>FUNCTION AS A PROTEASE</scope>
    <source>
        <strain>L2</strain>
    </source>
</reference>
<name>CDUB2_CHLTR</name>
<comment type="function">
    <text evidence="3">Effector proteins function to alter host cell physiology and promote bacterial survival in host tissues. This protease possesses deubiquitinating and deneddylating activities.</text>
</comment>
<comment type="subcellular location">
    <subcellularLocation>
        <location evidence="1">Secreted</location>
    </subcellularLocation>
    <subcellularLocation>
        <location evidence="1">Host cell</location>
    </subcellularLocation>
    <subcellularLocation>
        <location evidence="1">Membrane</location>
        <topology evidence="1">Single-pass membrane protein</topology>
    </subcellularLocation>
    <text evidence="1">Secreted, and delivered into the host cell.</text>
</comment>
<comment type="similarity">
    <text evidence="4">Belongs to the peptidase C48 family.</text>
</comment>
<sequence>MEPIHNPPPQTCSYSRPSTTYTSFKDASCGTKVTRIIIALFLIVISCGLILCAYTFRDLLDADYSAQEGPQQATKLLQQLDKVLTGPPLPIWDNEHLFQFSCLMQNKHRRVLPIDICNPLTKFNFLEYICNCLMTKQSVNVNETDMCELFCPPTCTPENYRRLLCTSSVFPFVMWHDPSADTQEAMLTKMDQTMSSGRVGNSHWVLVIVDIEHRCVTFFDSFYDYIASPQQMREQLEGLAASLGAIYPKEGGADSDQEELLSPFQVRIGSTVKVQSPGEFTCGAWCCQFLAWYLENPDFDLEEKVPTNPSERRALLADFISTTEQAMSRYSSLSWPTTD</sequence>